<proteinExistence type="inferred from homology"/>
<keyword id="KW-0030">Aminoacyl-tRNA synthetase</keyword>
<keyword id="KW-0067">ATP-binding</keyword>
<keyword id="KW-0963">Cytoplasm</keyword>
<keyword id="KW-0436">Ligase</keyword>
<keyword id="KW-0479">Metal-binding</keyword>
<keyword id="KW-0547">Nucleotide-binding</keyword>
<keyword id="KW-0648">Protein biosynthesis</keyword>
<keyword id="KW-1185">Reference proteome</keyword>
<keyword id="KW-0862">Zinc</keyword>
<name>SYI_LIMF3</name>
<gene>
    <name evidence="1" type="primary">ileS</name>
    <name type="ordered locus">LAF_0582</name>
</gene>
<feature type="chain" id="PRO_1000189175" description="Isoleucine--tRNA ligase">
    <location>
        <begin position="1"/>
        <end position="930"/>
    </location>
</feature>
<feature type="region of interest" description="Disordered" evidence="2">
    <location>
        <begin position="1"/>
        <end position="21"/>
    </location>
</feature>
<feature type="short sequence motif" description="'HIGH' region">
    <location>
        <begin position="57"/>
        <end position="67"/>
    </location>
</feature>
<feature type="short sequence motif" description="'KMSKS' region">
    <location>
        <begin position="596"/>
        <end position="600"/>
    </location>
</feature>
<feature type="binding site" evidence="1">
    <location>
        <position position="555"/>
    </location>
    <ligand>
        <name>L-isoleucyl-5'-AMP</name>
        <dbReference type="ChEBI" id="CHEBI:178002"/>
    </ligand>
</feature>
<feature type="binding site" evidence="1">
    <location>
        <position position="599"/>
    </location>
    <ligand>
        <name>ATP</name>
        <dbReference type="ChEBI" id="CHEBI:30616"/>
    </ligand>
</feature>
<feature type="binding site" evidence="1">
    <location>
        <position position="889"/>
    </location>
    <ligand>
        <name>Zn(2+)</name>
        <dbReference type="ChEBI" id="CHEBI:29105"/>
    </ligand>
</feature>
<feature type="binding site" evidence="1">
    <location>
        <position position="892"/>
    </location>
    <ligand>
        <name>Zn(2+)</name>
        <dbReference type="ChEBI" id="CHEBI:29105"/>
    </ligand>
</feature>
<feature type="binding site" evidence="1">
    <location>
        <position position="909"/>
    </location>
    <ligand>
        <name>Zn(2+)</name>
        <dbReference type="ChEBI" id="CHEBI:29105"/>
    </ligand>
</feature>
<feature type="binding site" evidence="1">
    <location>
        <position position="912"/>
    </location>
    <ligand>
        <name>Zn(2+)</name>
        <dbReference type="ChEBI" id="CHEBI:29105"/>
    </ligand>
</feature>
<dbReference type="EC" id="6.1.1.5" evidence="1"/>
<dbReference type="EMBL" id="AP008937">
    <property type="protein sequence ID" value="BAG26918.1"/>
    <property type="molecule type" value="Genomic_DNA"/>
</dbReference>
<dbReference type="RefSeq" id="WP_012391001.1">
    <property type="nucleotide sequence ID" value="NC_010610.1"/>
</dbReference>
<dbReference type="SMR" id="B2GB86"/>
<dbReference type="KEGG" id="lfe:LAF_0582"/>
<dbReference type="PATRIC" id="fig|334390.5.peg.628"/>
<dbReference type="eggNOG" id="COG0060">
    <property type="taxonomic scope" value="Bacteria"/>
</dbReference>
<dbReference type="HOGENOM" id="CLU_001493_7_1_9"/>
<dbReference type="Proteomes" id="UP000001697">
    <property type="component" value="Chromosome"/>
</dbReference>
<dbReference type="GO" id="GO:0005829">
    <property type="term" value="C:cytosol"/>
    <property type="evidence" value="ECO:0007669"/>
    <property type="project" value="TreeGrafter"/>
</dbReference>
<dbReference type="GO" id="GO:0002161">
    <property type="term" value="F:aminoacyl-tRNA deacylase activity"/>
    <property type="evidence" value="ECO:0007669"/>
    <property type="project" value="InterPro"/>
</dbReference>
<dbReference type="GO" id="GO:0005524">
    <property type="term" value="F:ATP binding"/>
    <property type="evidence" value="ECO:0007669"/>
    <property type="project" value="UniProtKB-UniRule"/>
</dbReference>
<dbReference type="GO" id="GO:0004822">
    <property type="term" value="F:isoleucine-tRNA ligase activity"/>
    <property type="evidence" value="ECO:0007669"/>
    <property type="project" value="UniProtKB-UniRule"/>
</dbReference>
<dbReference type="GO" id="GO:0000049">
    <property type="term" value="F:tRNA binding"/>
    <property type="evidence" value="ECO:0007669"/>
    <property type="project" value="InterPro"/>
</dbReference>
<dbReference type="GO" id="GO:0008270">
    <property type="term" value="F:zinc ion binding"/>
    <property type="evidence" value="ECO:0007669"/>
    <property type="project" value="UniProtKB-UniRule"/>
</dbReference>
<dbReference type="GO" id="GO:0006428">
    <property type="term" value="P:isoleucyl-tRNA aminoacylation"/>
    <property type="evidence" value="ECO:0007669"/>
    <property type="project" value="UniProtKB-UniRule"/>
</dbReference>
<dbReference type="CDD" id="cd07960">
    <property type="entry name" value="Anticodon_Ia_Ile_BEm"/>
    <property type="match status" value="1"/>
</dbReference>
<dbReference type="CDD" id="cd00818">
    <property type="entry name" value="IleRS_core"/>
    <property type="match status" value="1"/>
</dbReference>
<dbReference type="FunFam" id="1.10.10.830:FF:000001">
    <property type="entry name" value="Isoleucine--tRNA ligase"/>
    <property type="match status" value="1"/>
</dbReference>
<dbReference type="FunFam" id="3.40.50.620:FF:000152">
    <property type="entry name" value="Isoleucine--tRNA ligase"/>
    <property type="match status" value="1"/>
</dbReference>
<dbReference type="Gene3D" id="1.10.730.20">
    <property type="match status" value="1"/>
</dbReference>
<dbReference type="Gene3D" id="3.40.50.620">
    <property type="entry name" value="HUPs"/>
    <property type="match status" value="2"/>
</dbReference>
<dbReference type="Gene3D" id="1.10.10.830">
    <property type="entry name" value="Ile-tRNA synthetase CP2 domain-like"/>
    <property type="match status" value="1"/>
</dbReference>
<dbReference type="Gene3D" id="3.90.740.10">
    <property type="entry name" value="Valyl/Leucyl/Isoleucyl-tRNA synthetase, editing domain"/>
    <property type="match status" value="1"/>
</dbReference>
<dbReference type="HAMAP" id="MF_02002">
    <property type="entry name" value="Ile_tRNA_synth_type1"/>
    <property type="match status" value="1"/>
</dbReference>
<dbReference type="InterPro" id="IPR001412">
    <property type="entry name" value="aa-tRNA-synth_I_CS"/>
</dbReference>
<dbReference type="InterPro" id="IPR002300">
    <property type="entry name" value="aa-tRNA-synth_Ia"/>
</dbReference>
<dbReference type="InterPro" id="IPR033708">
    <property type="entry name" value="Anticodon_Ile_BEm"/>
</dbReference>
<dbReference type="InterPro" id="IPR002301">
    <property type="entry name" value="Ile-tRNA-ligase"/>
</dbReference>
<dbReference type="InterPro" id="IPR023585">
    <property type="entry name" value="Ile-tRNA-ligase_type1"/>
</dbReference>
<dbReference type="InterPro" id="IPR050081">
    <property type="entry name" value="Ile-tRNA_ligase"/>
</dbReference>
<dbReference type="InterPro" id="IPR013155">
    <property type="entry name" value="M/V/L/I-tRNA-synth_anticd-bd"/>
</dbReference>
<dbReference type="InterPro" id="IPR014729">
    <property type="entry name" value="Rossmann-like_a/b/a_fold"/>
</dbReference>
<dbReference type="InterPro" id="IPR009080">
    <property type="entry name" value="tRNAsynth_Ia_anticodon-bd"/>
</dbReference>
<dbReference type="InterPro" id="IPR009008">
    <property type="entry name" value="Val/Leu/Ile-tRNA-synth_edit"/>
</dbReference>
<dbReference type="InterPro" id="IPR010663">
    <property type="entry name" value="Znf_FPG/IleRS"/>
</dbReference>
<dbReference type="NCBIfam" id="TIGR00392">
    <property type="entry name" value="ileS"/>
    <property type="match status" value="1"/>
</dbReference>
<dbReference type="PANTHER" id="PTHR42765:SF1">
    <property type="entry name" value="ISOLEUCINE--TRNA LIGASE, MITOCHONDRIAL"/>
    <property type="match status" value="1"/>
</dbReference>
<dbReference type="PANTHER" id="PTHR42765">
    <property type="entry name" value="SOLEUCYL-TRNA SYNTHETASE"/>
    <property type="match status" value="1"/>
</dbReference>
<dbReference type="Pfam" id="PF08264">
    <property type="entry name" value="Anticodon_1"/>
    <property type="match status" value="1"/>
</dbReference>
<dbReference type="Pfam" id="PF00133">
    <property type="entry name" value="tRNA-synt_1"/>
    <property type="match status" value="1"/>
</dbReference>
<dbReference type="Pfam" id="PF06827">
    <property type="entry name" value="zf-FPG_IleRS"/>
    <property type="match status" value="1"/>
</dbReference>
<dbReference type="PRINTS" id="PR00984">
    <property type="entry name" value="TRNASYNTHILE"/>
</dbReference>
<dbReference type="SUPFAM" id="SSF47323">
    <property type="entry name" value="Anticodon-binding domain of a subclass of class I aminoacyl-tRNA synthetases"/>
    <property type="match status" value="1"/>
</dbReference>
<dbReference type="SUPFAM" id="SSF52374">
    <property type="entry name" value="Nucleotidylyl transferase"/>
    <property type="match status" value="1"/>
</dbReference>
<dbReference type="SUPFAM" id="SSF50677">
    <property type="entry name" value="ValRS/IleRS/LeuRS editing domain"/>
    <property type="match status" value="1"/>
</dbReference>
<dbReference type="PROSITE" id="PS00178">
    <property type="entry name" value="AA_TRNA_LIGASE_I"/>
    <property type="match status" value="1"/>
</dbReference>
<sequence>MRVKDTLNLGKTKFPMRGRLPETEAQREALWEENKVYEQRQKLNEGKPSFVLHDGPPYANGPIHIGHAMNKISKDFIVRYKSMTGYRAPYVPGWDTHGLPIEHQLTKAGYDRKKMSLTEFRDLCQKYALEQVEIQKKGFKRLGVAGEWDHPYLTLAKEFEAAQIKVFGAFAKRGLLYQAKKPVYWSWSSESALAEAEVEYHDVVAKTAFFTEQVQDGKGLLDSDTYLVGWTTTPWTIPASEAVAVSADFEYALVQPSGSDRKYVVAASLLGDLAQKFNWTDYQVVKTFKGAEMEGMTTKHPYIDRELLVGLADYVTDDAGTGLVHTAPGYGDDDYNFGKKYNLPIFAPMNDQGVLTAENGPEFDGVFYQDADDISLRLLEEHDALLLEEDLEHSYPFDWRTKKPIVFRATDQWFVSIDKMRDEILKAVDEVTYYPTWGKVRLRNMLKDRGDWVISRQRVWGVPLPIFYAEDGTPIMTEETINHVSDLFREYGSNVWFDREAKDLLPAGFTSEHSPNGKFTKETDIMDVWFDSGSSHQGVLAERDYLTYPADMYLEGSDQYRGWFNSSLITSVVVSGHAPYKSVLSQGFTLDQSGKKMSKSLGNVIDPNKVVKQMGAEIIRLWVMSADTSADVRVSMETLQQISESYRKLRNTFRFLLANTSDFGPENFVAYEKREAVDQYMTVNFNHFLAGMRDEFDRYDFLNAYKHLINFVNNDLSSFYMNVAKDVLYIEPEDSHVRRSMQATFYEILSGLTKLLTPILPHTTEEVWSYMDEPEDFVQLTEIPEARTFENGNALLEKWEGFMELRSHVLKCLEEARNAKLIGRSLEASADLYLTASQQELLADLGTDAGLLCGVSALSVHDASEAPAEAESFSDNAAVLVQAAKGEVCDRCRMTKEDVGSDPAYQQLCARCAKLVRENFPQTVEEGLEK</sequence>
<organism>
    <name type="scientific">Limosilactobacillus fermentum (strain NBRC 3956 / LMG 18251)</name>
    <name type="common">Lactobacillus fermentum</name>
    <dbReference type="NCBI Taxonomy" id="334390"/>
    <lineage>
        <taxon>Bacteria</taxon>
        <taxon>Bacillati</taxon>
        <taxon>Bacillota</taxon>
        <taxon>Bacilli</taxon>
        <taxon>Lactobacillales</taxon>
        <taxon>Lactobacillaceae</taxon>
        <taxon>Limosilactobacillus</taxon>
    </lineage>
</organism>
<reference key="1">
    <citation type="journal article" date="2008" name="DNA Res.">
        <title>Comparative genome analysis of Lactobacillus reuteri and Lactobacillus fermentum reveal a genomic island for reuterin and cobalamin production.</title>
        <authorList>
            <person name="Morita H."/>
            <person name="Toh H."/>
            <person name="Fukuda S."/>
            <person name="Horikawa H."/>
            <person name="Oshima K."/>
            <person name="Suzuki T."/>
            <person name="Murakami M."/>
            <person name="Hisamatsu S."/>
            <person name="Kato Y."/>
            <person name="Takizawa T."/>
            <person name="Fukuoka H."/>
            <person name="Yoshimura T."/>
            <person name="Itoh K."/>
            <person name="O'Sullivan D.J."/>
            <person name="McKay L.L."/>
            <person name="Ohno H."/>
            <person name="Kikuchi J."/>
            <person name="Masaoka T."/>
            <person name="Hattori M."/>
        </authorList>
    </citation>
    <scope>NUCLEOTIDE SEQUENCE [LARGE SCALE GENOMIC DNA]</scope>
    <source>
        <strain>NBRC 3956 / LMG 18251</strain>
    </source>
</reference>
<evidence type="ECO:0000255" key="1">
    <source>
        <dbReference type="HAMAP-Rule" id="MF_02002"/>
    </source>
</evidence>
<evidence type="ECO:0000256" key="2">
    <source>
        <dbReference type="SAM" id="MobiDB-lite"/>
    </source>
</evidence>
<comment type="function">
    <text evidence="1">Catalyzes the attachment of isoleucine to tRNA(Ile). As IleRS can inadvertently accommodate and process structurally similar amino acids such as valine, to avoid such errors it has two additional distinct tRNA(Ile)-dependent editing activities. One activity is designated as 'pretransfer' editing and involves the hydrolysis of activated Val-AMP. The other activity is designated 'posttransfer' editing and involves deacylation of mischarged Val-tRNA(Ile).</text>
</comment>
<comment type="catalytic activity">
    <reaction evidence="1">
        <text>tRNA(Ile) + L-isoleucine + ATP = L-isoleucyl-tRNA(Ile) + AMP + diphosphate</text>
        <dbReference type="Rhea" id="RHEA:11060"/>
        <dbReference type="Rhea" id="RHEA-COMP:9666"/>
        <dbReference type="Rhea" id="RHEA-COMP:9695"/>
        <dbReference type="ChEBI" id="CHEBI:30616"/>
        <dbReference type="ChEBI" id="CHEBI:33019"/>
        <dbReference type="ChEBI" id="CHEBI:58045"/>
        <dbReference type="ChEBI" id="CHEBI:78442"/>
        <dbReference type="ChEBI" id="CHEBI:78528"/>
        <dbReference type="ChEBI" id="CHEBI:456215"/>
        <dbReference type="EC" id="6.1.1.5"/>
    </reaction>
</comment>
<comment type="cofactor">
    <cofactor evidence="1">
        <name>Zn(2+)</name>
        <dbReference type="ChEBI" id="CHEBI:29105"/>
    </cofactor>
    <text evidence="1">Binds 1 zinc ion per subunit.</text>
</comment>
<comment type="subunit">
    <text evidence="1">Monomer.</text>
</comment>
<comment type="subcellular location">
    <subcellularLocation>
        <location evidence="1">Cytoplasm</location>
    </subcellularLocation>
</comment>
<comment type="domain">
    <text evidence="1">IleRS has two distinct active sites: one for aminoacylation and one for editing. The misactivated valine is translocated from the active site to the editing site, which sterically excludes the correctly activated isoleucine. The single editing site contains two valyl binding pockets, one specific for each substrate (Val-AMP or Val-tRNA(Ile)).</text>
</comment>
<comment type="similarity">
    <text evidence="1">Belongs to the class-I aminoacyl-tRNA synthetase family. IleS type 1 subfamily.</text>
</comment>
<accession>B2GB86</accession>
<protein>
    <recommendedName>
        <fullName evidence="1">Isoleucine--tRNA ligase</fullName>
        <ecNumber evidence="1">6.1.1.5</ecNumber>
    </recommendedName>
    <alternativeName>
        <fullName evidence="1">Isoleucyl-tRNA synthetase</fullName>
        <shortName evidence="1">IleRS</shortName>
    </alternativeName>
</protein>